<accession>B1VIF7</accession>
<name>Y1581_CORU7</name>
<keyword id="KW-0456">Lyase</keyword>
<keyword id="KW-1185">Reference proteome</keyword>
<organism>
    <name type="scientific">Corynebacterium urealyticum (strain ATCC 43042 / DSM 7109)</name>
    <dbReference type="NCBI Taxonomy" id="504474"/>
    <lineage>
        <taxon>Bacteria</taxon>
        <taxon>Bacillati</taxon>
        <taxon>Actinomycetota</taxon>
        <taxon>Actinomycetes</taxon>
        <taxon>Mycobacteriales</taxon>
        <taxon>Corynebacteriaceae</taxon>
        <taxon>Corynebacterium</taxon>
    </lineage>
</organism>
<reference key="1">
    <citation type="journal article" date="2008" name="J. Biotechnol.">
        <title>The lifestyle of Corynebacterium urealyticum derived from its complete genome sequence established by pyrosequencing.</title>
        <authorList>
            <person name="Tauch A."/>
            <person name="Trost E."/>
            <person name="Tilker A."/>
            <person name="Ludewig U."/>
            <person name="Schneiker S."/>
            <person name="Goesmann A."/>
            <person name="Arnold W."/>
            <person name="Bekel T."/>
            <person name="Brinkrolf K."/>
            <person name="Brune I."/>
            <person name="Goetker S."/>
            <person name="Kalinowski J."/>
            <person name="Kamp P.-B."/>
            <person name="Lobo F.P."/>
            <person name="Viehoever P."/>
            <person name="Weisshaar B."/>
            <person name="Soriano F."/>
            <person name="Droege M."/>
            <person name="Puehler A."/>
        </authorList>
    </citation>
    <scope>NUCLEOTIDE SEQUENCE [LARGE SCALE GENOMIC DNA]</scope>
    <source>
        <strain>ATCC 43042 / DSM 7109</strain>
    </source>
</reference>
<proteinExistence type="inferred from homology"/>
<comment type="similarity">
    <text evidence="1">Belongs to the D-glutamate cyclase family.</text>
</comment>
<feature type="chain" id="PRO_0000379834" description="Putative hydro-lyase cu1581">
    <location>
        <begin position="1"/>
        <end position="262"/>
    </location>
</feature>
<dbReference type="EC" id="4.2.1.-" evidence="1"/>
<dbReference type="EMBL" id="AM942444">
    <property type="protein sequence ID" value="CAQ05541.1"/>
    <property type="molecule type" value="Genomic_DNA"/>
</dbReference>
<dbReference type="RefSeq" id="WP_012360817.1">
    <property type="nucleotide sequence ID" value="NC_010545.1"/>
</dbReference>
<dbReference type="SMR" id="B1VIF7"/>
<dbReference type="STRING" id="504474.cu1581"/>
<dbReference type="GeneID" id="60604360"/>
<dbReference type="KEGG" id="cur:cu1581"/>
<dbReference type="eggNOG" id="COG4336">
    <property type="taxonomic scope" value="Bacteria"/>
</dbReference>
<dbReference type="HOGENOM" id="CLU_059759_0_0_11"/>
<dbReference type="Proteomes" id="UP000001727">
    <property type="component" value="Chromosome"/>
</dbReference>
<dbReference type="GO" id="GO:0016829">
    <property type="term" value="F:lyase activity"/>
    <property type="evidence" value="ECO:0007669"/>
    <property type="project" value="UniProtKB-KW"/>
</dbReference>
<dbReference type="FunFam" id="3.30.2040.10:FF:000001">
    <property type="entry name" value="D-glutamate cyclase, mitochondrial"/>
    <property type="match status" value="1"/>
</dbReference>
<dbReference type="Gene3D" id="3.40.1640.10">
    <property type="entry name" value="PSTPO5379-like"/>
    <property type="match status" value="1"/>
</dbReference>
<dbReference type="Gene3D" id="3.30.2040.10">
    <property type="entry name" value="PSTPO5379-like domain"/>
    <property type="match status" value="1"/>
</dbReference>
<dbReference type="HAMAP" id="MF_01830">
    <property type="entry name" value="Hydro_lyase"/>
    <property type="match status" value="1"/>
</dbReference>
<dbReference type="InterPro" id="IPR009906">
    <property type="entry name" value="D-Glu_cyclase"/>
</dbReference>
<dbReference type="InterPro" id="IPR038021">
    <property type="entry name" value="Putative_hydro-lyase"/>
</dbReference>
<dbReference type="InterPro" id="IPR016938">
    <property type="entry name" value="UPF0317"/>
</dbReference>
<dbReference type="NCBIfam" id="NF003969">
    <property type="entry name" value="PRK05463.1"/>
    <property type="match status" value="1"/>
</dbReference>
<dbReference type="PANTHER" id="PTHR32022">
    <property type="entry name" value="D-GLUTAMATE CYCLASE, MITOCHONDRIAL"/>
    <property type="match status" value="1"/>
</dbReference>
<dbReference type="PANTHER" id="PTHR32022:SF10">
    <property type="entry name" value="D-GLUTAMATE CYCLASE, MITOCHONDRIAL"/>
    <property type="match status" value="1"/>
</dbReference>
<dbReference type="Pfam" id="PF07286">
    <property type="entry name" value="D-Glu_cyclase"/>
    <property type="match status" value="1"/>
</dbReference>
<dbReference type="PIRSF" id="PIRSF029755">
    <property type="entry name" value="UCP029755"/>
    <property type="match status" value="1"/>
</dbReference>
<dbReference type="SUPFAM" id="SSF160920">
    <property type="entry name" value="PSTPO5379-like"/>
    <property type="match status" value="1"/>
</dbReference>
<gene>
    <name type="ordered locus">cu1581</name>
</gene>
<evidence type="ECO:0000255" key="1">
    <source>
        <dbReference type="HAMAP-Rule" id="MF_01830"/>
    </source>
</evidence>
<sequence length="262" mass="28180">MSTSTHEMSPAAARAAFREGVAVPTTGYSDGYAQANLMVLPKEYAFDFLLFAQRNPKPCPILGVLEPGQLNSELLPGGDIRTDIPKYRVYRDGELAGEYPDVTEFWRDDLVSFLIGCSFTFEGALLDNGIPVAHIEQGRNVPMYKTSIPTARAGRFHGPLVVSMRPIPASQIADAVRVTSRYPAVHGAPVHVGDPAAIGISDLASPDYGDAVEIPDGHIPVFWACGVTPQAAVMETKPSLAIAHAPGHMLVTDARDLQYQVP</sequence>
<protein>
    <recommendedName>
        <fullName evidence="1">Putative hydro-lyase cu1581</fullName>
        <ecNumber evidence="1">4.2.1.-</ecNumber>
    </recommendedName>
</protein>